<comment type="function">
    <text evidence="1">Catalyzes the conversion of 1-hydroxy-2-methyl-2-(E)-butenyl 4-diphosphate (HMBPP) into a mixture of isopentenyl diphosphate (IPP) and dimethylallyl diphosphate (DMAPP). Acts in the terminal step of the DOXP/MEP pathway for isoprenoid precursor biosynthesis.</text>
</comment>
<comment type="catalytic activity">
    <reaction evidence="1">
        <text>isopentenyl diphosphate + 2 oxidized [2Fe-2S]-[ferredoxin] + H2O = (2E)-4-hydroxy-3-methylbut-2-enyl diphosphate + 2 reduced [2Fe-2S]-[ferredoxin] + 2 H(+)</text>
        <dbReference type="Rhea" id="RHEA:24488"/>
        <dbReference type="Rhea" id="RHEA-COMP:10000"/>
        <dbReference type="Rhea" id="RHEA-COMP:10001"/>
        <dbReference type="ChEBI" id="CHEBI:15377"/>
        <dbReference type="ChEBI" id="CHEBI:15378"/>
        <dbReference type="ChEBI" id="CHEBI:33737"/>
        <dbReference type="ChEBI" id="CHEBI:33738"/>
        <dbReference type="ChEBI" id="CHEBI:128753"/>
        <dbReference type="ChEBI" id="CHEBI:128769"/>
        <dbReference type="EC" id="1.17.7.4"/>
    </reaction>
</comment>
<comment type="catalytic activity">
    <reaction evidence="1">
        <text>dimethylallyl diphosphate + 2 oxidized [2Fe-2S]-[ferredoxin] + H2O = (2E)-4-hydroxy-3-methylbut-2-enyl diphosphate + 2 reduced [2Fe-2S]-[ferredoxin] + 2 H(+)</text>
        <dbReference type="Rhea" id="RHEA:24825"/>
        <dbReference type="Rhea" id="RHEA-COMP:10000"/>
        <dbReference type="Rhea" id="RHEA-COMP:10001"/>
        <dbReference type="ChEBI" id="CHEBI:15377"/>
        <dbReference type="ChEBI" id="CHEBI:15378"/>
        <dbReference type="ChEBI" id="CHEBI:33737"/>
        <dbReference type="ChEBI" id="CHEBI:33738"/>
        <dbReference type="ChEBI" id="CHEBI:57623"/>
        <dbReference type="ChEBI" id="CHEBI:128753"/>
        <dbReference type="EC" id="1.17.7.4"/>
    </reaction>
</comment>
<comment type="cofactor">
    <cofactor evidence="1">
        <name>[4Fe-4S] cluster</name>
        <dbReference type="ChEBI" id="CHEBI:49883"/>
    </cofactor>
    <text evidence="1">Binds 1 [4Fe-4S] cluster per subunit.</text>
</comment>
<comment type="pathway">
    <text evidence="1">Isoprenoid biosynthesis; dimethylallyl diphosphate biosynthesis; dimethylallyl diphosphate from (2E)-4-hydroxy-3-methylbutenyl diphosphate: step 1/1.</text>
</comment>
<comment type="pathway">
    <text evidence="1">Isoprenoid biosynthesis; isopentenyl diphosphate biosynthesis via DXP pathway; isopentenyl diphosphate from 1-deoxy-D-xylulose 5-phosphate: step 6/6.</text>
</comment>
<comment type="similarity">
    <text evidence="1">Belongs to the IspH family.</text>
</comment>
<feature type="chain" id="PRO_0000128795" description="4-hydroxy-3-methylbut-2-enyl diphosphate reductase">
    <location>
        <begin position="1"/>
        <end position="277"/>
    </location>
</feature>
<feature type="active site" description="Proton donor" evidence="1">
    <location>
        <position position="122"/>
    </location>
</feature>
<feature type="binding site" evidence="1">
    <location>
        <position position="12"/>
    </location>
    <ligand>
        <name>[4Fe-4S] cluster</name>
        <dbReference type="ChEBI" id="CHEBI:49883"/>
    </ligand>
</feature>
<feature type="binding site" evidence="1">
    <location>
        <position position="36"/>
    </location>
    <ligand>
        <name>(2E)-4-hydroxy-3-methylbut-2-enyl diphosphate</name>
        <dbReference type="ChEBI" id="CHEBI:128753"/>
    </ligand>
</feature>
<feature type="binding site" evidence="1">
    <location>
        <position position="36"/>
    </location>
    <ligand>
        <name>dimethylallyl diphosphate</name>
        <dbReference type="ChEBI" id="CHEBI:57623"/>
    </ligand>
</feature>
<feature type="binding site" evidence="1">
    <location>
        <position position="36"/>
    </location>
    <ligand>
        <name>isopentenyl diphosphate</name>
        <dbReference type="ChEBI" id="CHEBI:128769"/>
    </ligand>
</feature>
<feature type="binding site" evidence="1">
    <location>
        <position position="70"/>
    </location>
    <ligand>
        <name>(2E)-4-hydroxy-3-methylbut-2-enyl diphosphate</name>
        <dbReference type="ChEBI" id="CHEBI:128753"/>
    </ligand>
</feature>
<feature type="binding site" evidence="1">
    <location>
        <position position="70"/>
    </location>
    <ligand>
        <name>dimethylallyl diphosphate</name>
        <dbReference type="ChEBI" id="CHEBI:57623"/>
    </ligand>
</feature>
<feature type="binding site" evidence="1">
    <location>
        <position position="70"/>
    </location>
    <ligand>
        <name>isopentenyl diphosphate</name>
        <dbReference type="ChEBI" id="CHEBI:128769"/>
    </ligand>
</feature>
<feature type="binding site" evidence="1">
    <location>
        <position position="92"/>
    </location>
    <ligand>
        <name>[4Fe-4S] cluster</name>
        <dbReference type="ChEBI" id="CHEBI:49883"/>
    </ligand>
</feature>
<feature type="binding site" evidence="1">
    <location>
        <position position="120"/>
    </location>
    <ligand>
        <name>(2E)-4-hydroxy-3-methylbut-2-enyl diphosphate</name>
        <dbReference type="ChEBI" id="CHEBI:128753"/>
    </ligand>
</feature>
<feature type="binding site" evidence="1">
    <location>
        <position position="120"/>
    </location>
    <ligand>
        <name>dimethylallyl diphosphate</name>
        <dbReference type="ChEBI" id="CHEBI:57623"/>
    </ligand>
</feature>
<feature type="binding site" evidence="1">
    <location>
        <position position="120"/>
    </location>
    <ligand>
        <name>isopentenyl diphosphate</name>
        <dbReference type="ChEBI" id="CHEBI:128769"/>
    </ligand>
</feature>
<feature type="binding site" evidence="1">
    <location>
        <position position="158"/>
    </location>
    <ligand>
        <name>(2E)-4-hydroxy-3-methylbut-2-enyl diphosphate</name>
        <dbReference type="ChEBI" id="CHEBI:128753"/>
    </ligand>
</feature>
<feature type="binding site" evidence="1">
    <location>
        <position position="186"/>
    </location>
    <ligand>
        <name>[4Fe-4S] cluster</name>
        <dbReference type="ChEBI" id="CHEBI:49883"/>
    </ligand>
</feature>
<feature type="binding site" evidence="1">
    <location>
        <position position="214"/>
    </location>
    <ligand>
        <name>(2E)-4-hydroxy-3-methylbut-2-enyl diphosphate</name>
        <dbReference type="ChEBI" id="CHEBI:128753"/>
    </ligand>
</feature>
<feature type="binding site" evidence="1">
    <location>
        <position position="214"/>
    </location>
    <ligand>
        <name>dimethylallyl diphosphate</name>
        <dbReference type="ChEBI" id="CHEBI:57623"/>
    </ligand>
</feature>
<feature type="binding site" evidence="1">
    <location>
        <position position="214"/>
    </location>
    <ligand>
        <name>isopentenyl diphosphate</name>
        <dbReference type="ChEBI" id="CHEBI:128769"/>
    </ligand>
</feature>
<feature type="binding site" evidence="1">
    <location>
        <position position="216"/>
    </location>
    <ligand>
        <name>(2E)-4-hydroxy-3-methylbut-2-enyl diphosphate</name>
        <dbReference type="ChEBI" id="CHEBI:128753"/>
    </ligand>
</feature>
<feature type="binding site" evidence="1">
    <location>
        <position position="216"/>
    </location>
    <ligand>
        <name>dimethylallyl diphosphate</name>
        <dbReference type="ChEBI" id="CHEBI:57623"/>
    </ligand>
</feature>
<feature type="binding site" evidence="1">
    <location>
        <position position="216"/>
    </location>
    <ligand>
        <name>isopentenyl diphosphate</name>
        <dbReference type="ChEBI" id="CHEBI:128769"/>
    </ligand>
</feature>
<feature type="binding site" evidence="1">
    <location>
        <position position="258"/>
    </location>
    <ligand>
        <name>(2E)-4-hydroxy-3-methylbut-2-enyl diphosphate</name>
        <dbReference type="ChEBI" id="CHEBI:128753"/>
    </ligand>
</feature>
<feature type="binding site" evidence="1">
    <location>
        <position position="258"/>
    </location>
    <ligand>
        <name>dimethylallyl diphosphate</name>
        <dbReference type="ChEBI" id="CHEBI:57623"/>
    </ligand>
</feature>
<feature type="binding site" evidence="1">
    <location>
        <position position="258"/>
    </location>
    <ligand>
        <name>isopentenyl diphosphate</name>
        <dbReference type="ChEBI" id="CHEBI:128769"/>
    </ligand>
</feature>
<keyword id="KW-0004">4Fe-4S</keyword>
<keyword id="KW-0408">Iron</keyword>
<keyword id="KW-0411">Iron-sulfur</keyword>
<keyword id="KW-0414">Isoprene biosynthesis</keyword>
<keyword id="KW-0479">Metal-binding</keyword>
<keyword id="KW-0560">Oxidoreductase</keyword>
<keyword id="KW-1185">Reference proteome</keyword>
<dbReference type="EC" id="1.17.7.4" evidence="1"/>
<dbReference type="EMBL" id="AL111168">
    <property type="protein sequence ID" value="CAL35015.1"/>
    <property type="molecule type" value="Genomic_DNA"/>
</dbReference>
<dbReference type="PIR" id="F81362">
    <property type="entry name" value="F81362"/>
</dbReference>
<dbReference type="RefSeq" id="WP_002852585.1">
    <property type="nucleotide sequence ID" value="NZ_SZUC01000001.1"/>
</dbReference>
<dbReference type="RefSeq" id="YP_002344293.1">
    <property type="nucleotide sequence ID" value="NC_002163.1"/>
</dbReference>
<dbReference type="SMR" id="P0C632"/>
<dbReference type="IntAct" id="P0C632">
    <property type="interactions" value="7"/>
</dbReference>
<dbReference type="STRING" id="192222.Cj0894c"/>
<dbReference type="PaxDb" id="192222-Cj0894c"/>
<dbReference type="EnsemblBacteria" id="CAL35015">
    <property type="protein sequence ID" value="CAL35015"/>
    <property type="gene ID" value="Cj0894c"/>
</dbReference>
<dbReference type="GeneID" id="905189"/>
<dbReference type="KEGG" id="cje:Cj0894c"/>
<dbReference type="PATRIC" id="fig|192222.6.peg.878"/>
<dbReference type="eggNOG" id="COG0761">
    <property type="taxonomic scope" value="Bacteria"/>
</dbReference>
<dbReference type="HOGENOM" id="CLU_027486_0_1_7"/>
<dbReference type="OrthoDB" id="9804068at2"/>
<dbReference type="UniPathway" id="UPA00056">
    <property type="reaction ID" value="UER00097"/>
</dbReference>
<dbReference type="UniPathway" id="UPA00059">
    <property type="reaction ID" value="UER00105"/>
</dbReference>
<dbReference type="Proteomes" id="UP000000799">
    <property type="component" value="Chromosome"/>
</dbReference>
<dbReference type="GO" id="GO:0051539">
    <property type="term" value="F:4 iron, 4 sulfur cluster binding"/>
    <property type="evidence" value="ECO:0007669"/>
    <property type="project" value="UniProtKB-UniRule"/>
</dbReference>
<dbReference type="GO" id="GO:0051745">
    <property type="term" value="F:4-hydroxy-3-methylbut-2-enyl diphosphate reductase activity"/>
    <property type="evidence" value="ECO:0007669"/>
    <property type="project" value="UniProtKB-UniRule"/>
</dbReference>
<dbReference type="GO" id="GO:0046872">
    <property type="term" value="F:metal ion binding"/>
    <property type="evidence" value="ECO:0007669"/>
    <property type="project" value="UniProtKB-KW"/>
</dbReference>
<dbReference type="GO" id="GO:0050992">
    <property type="term" value="P:dimethylallyl diphosphate biosynthetic process"/>
    <property type="evidence" value="ECO:0007669"/>
    <property type="project" value="UniProtKB-UniRule"/>
</dbReference>
<dbReference type="GO" id="GO:0019288">
    <property type="term" value="P:isopentenyl diphosphate biosynthetic process, methylerythritol 4-phosphate pathway"/>
    <property type="evidence" value="ECO:0007669"/>
    <property type="project" value="UniProtKB-UniRule"/>
</dbReference>
<dbReference type="GO" id="GO:0016114">
    <property type="term" value="P:terpenoid biosynthetic process"/>
    <property type="evidence" value="ECO:0007669"/>
    <property type="project" value="UniProtKB-UniRule"/>
</dbReference>
<dbReference type="CDD" id="cd13944">
    <property type="entry name" value="lytB_ispH"/>
    <property type="match status" value="1"/>
</dbReference>
<dbReference type="Gene3D" id="3.40.50.11270">
    <property type="match status" value="1"/>
</dbReference>
<dbReference type="Gene3D" id="3.40.1010.20">
    <property type="entry name" value="4-hydroxy-3-methylbut-2-enyl diphosphate reductase, catalytic domain"/>
    <property type="match status" value="2"/>
</dbReference>
<dbReference type="HAMAP" id="MF_00191">
    <property type="entry name" value="IspH"/>
    <property type="match status" value="1"/>
</dbReference>
<dbReference type="InterPro" id="IPR003451">
    <property type="entry name" value="LytB/IspH"/>
</dbReference>
<dbReference type="NCBIfam" id="TIGR00216">
    <property type="entry name" value="ispH_lytB"/>
    <property type="match status" value="1"/>
</dbReference>
<dbReference type="NCBIfam" id="NF002187">
    <property type="entry name" value="PRK01045.1-1"/>
    <property type="match status" value="1"/>
</dbReference>
<dbReference type="PANTHER" id="PTHR30426">
    <property type="entry name" value="4-HYDROXY-3-METHYLBUT-2-ENYL DIPHOSPHATE REDUCTASE"/>
    <property type="match status" value="1"/>
</dbReference>
<dbReference type="PANTHER" id="PTHR30426:SF0">
    <property type="entry name" value="4-HYDROXY-3-METHYLBUT-2-ENYL DIPHOSPHATE REDUCTASE"/>
    <property type="match status" value="1"/>
</dbReference>
<dbReference type="Pfam" id="PF02401">
    <property type="entry name" value="LYTB"/>
    <property type="match status" value="1"/>
</dbReference>
<name>ISPH_CAMJE</name>
<organism>
    <name type="scientific">Campylobacter jejuni subsp. jejuni serotype O:2 (strain ATCC 700819 / NCTC 11168)</name>
    <dbReference type="NCBI Taxonomy" id="192222"/>
    <lineage>
        <taxon>Bacteria</taxon>
        <taxon>Pseudomonadati</taxon>
        <taxon>Campylobacterota</taxon>
        <taxon>Epsilonproteobacteria</taxon>
        <taxon>Campylobacterales</taxon>
        <taxon>Campylobacteraceae</taxon>
        <taxon>Campylobacter</taxon>
    </lineage>
</organism>
<accession>P0C632</accession>
<accession>P94644</accession>
<accession>Q0PA04</accession>
<accession>Q9PP37</accession>
<gene>
    <name evidence="1" type="primary">ispH</name>
    <name type="synonym">lytB</name>
    <name type="ordered locus">Cj0894c</name>
</gene>
<proteinExistence type="inferred from homology"/>
<sequence length="277" mass="31551">MIIELAKNYGFCFGVKRAIKKAEQIKDAATIGPLIHNNEEISRLQKNFNVKTLENIQALSNEKKAIIRTHGITKQDLEELRKKDIEIFDATCPFVTKPQQICEQMSKEGYEVVIFGDENHPEVKGVKSYVSTKAYVVLDKKELQNIKLPNKIAVVSQTTKKPEHFMEIVNFLILKTKEVRVFNTICDATFKNQDAIKELSLKSDVMVVVGGKNSANTKQLFLIAKTNCEDSYLIETEEELKKEWFLDKKHCGISAGASTPDWIIQKVIAKIENFRIN</sequence>
<reference key="1">
    <citation type="journal article" date="2000" name="Nature">
        <title>The genome sequence of the food-borne pathogen Campylobacter jejuni reveals hypervariable sequences.</title>
        <authorList>
            <person name="Parkhill J."/>
            <person name="Wren B.W."/>
            <person name="Mungall K.L."/>
            <person name="Ketley J.M."/>
            <person name="Churcher C.M."/>
            <person name="Basham D."/>
            <person name="Chillingworth T."/>
            <person name="Davies R.M."/>
            <person name="Feltwell T."/>
            <person name="Holroyd S."/>
            <person name="Jagels K."/>
            <person name="Karlyshev A.V."/>
            <person name="Moule S."/>
            <person name="Pallen M.J."/>
            <person name="Penn C.W."/>
            <person name="Quail M.A."/>
            <person name="Rajandream M.A."/>
            <person name="Rutherford K.M."/>
            <person name="van Vliet A.H.M."/>
            <person name="Whitehead S."/>
            <person name="Barrell B.G."/>
        </authorList>
    </citation>
    <scope>NUCLEOTIDE SEQUENCE [LARGE SCALE GENOMIC DNA]</scope>
    <source>
        <strain>ATCC 700819 / NCTC 11168</strain>
    </source>
</reference>
<protein>
    <recommendedName>
        <fullName evidence="1">4-hydroxy-3-methylbut-2-enyl diphosphate reductase</fullName>
        <shortName evidence="1">HMBPP reductase</shortName>
        <ecNumber evidence="1">1.17.7.4</ecNumber>
    </recommendedName>
</protein>
<evidence type="ECO:0000255" key="1">
    <source>
        <dbReference type="HAMAP-Rule" id="MF_00191"/>
    </source>
</evidence>